<feature type="chain" id="PRO_0000189741" description="Gamma-glutamyl phosphate reductase">
    <location>
        <begin position="1"/>
        <end position="421"/>
    </location>
</feature>
<proteinExistence type="inferred from homology"/>
<accession>Q6AFX9</accession>
<evidence type="ECO:0000255" key="1">
    <source>
        <dbReference type="HAMAP-Rule" id="MF_00412"/>
    </source>
</evidence>
<protein>
    <recommendedName>
        <fullName evidence="1">Gamma-glutamyl phosphate reductase</fullName>
        <shortName evidence="1">GPR</shortName>
        <ecNumber evidence="1">1.2.1.41</ecNumber>
    </recommendedName>
    <alternativeName>
        <fullName evidence="1">Glutamate-5-semialdehyde dehydrogenase</fullName>
    </alternativeName>
    <alternativeName>
        <fullName evidence="1">Glutamyl-gamma-semialdehyde dehydrogenase</fullName>
        <shortName evidence="1">GSA dehydrogenase</shortName>
    </alternativeName>
</protein>
<gene>
    <name evidence="1" type="primary">proA</name>
    <name type="ordered locus">Lxx08080</name>
</gene>
<name>PROA_LEIXX</name>
<comment type="function">
    <text evidence="1">Catalyzes the NADPH-dependent reduction of L-glutamate 5-phosphate into L-glutamate 5-semialdehyde and phosphate. The product spontaneously undergoes cyclization to form 1-pyrroline-5-carboxylate.</text>
</comment>
<comment type="catalytic activity">
    <reaction evidence="1">
        <text>L-glutamate 5-semialdehyde + phosphate + NADP(+) = L-glutamyl 5-phosphate + NADPH + H(+)</text>
        <dbReference type="Rhea" id="RHEA:19541"/>
        <dbReference type="ChEBI" id="CHEBI:15378"/>
        <dbReference type="ChEBI" id="CHEBI:43474"/>
        <dbReference type="ChEBI" id="CHEBI:57783"/>
        <dbReference type="ChEBI" id="CHEBI:58066"/>
        <dbReference type="ChEBI" id="CHEBI:58274"/>
        <dbReference type="ChEBI" id="CHEBI:58349"/>
        <dbReference type="EC" id="1.2.1.41"/>
    </reaction>
</comment>
<comment type="pathway">
    <text evidence="1">Amino-acid biosynthesis; L-proline biosynthesis; L-glutamate 5-semialdehyde from L-glutamate: step 2/2.</text>
</comment>
<comment type="subcellular location">
    <subcellularLocation>
        <location evidence="1">Cytoplasm</location>
    </subcellularLocation>
</comment>
<comment type="similarity">
    <text evidence="1">Belongs to the gamma-glutamyl phosphate reductase family.</text>
</comment>
<reference key="1">
    <citation type="journal article" date="2004" name="Mol. Plant Microbe Interact.">
        <title>The genome sequence of the Gram-positive sugarcane pathogen Leifsonia xyli subsp. xyli.</title>
        <authorList>
            <person name="Monteiro-Vitorello C.B."/>
            <person name="Camargo L.E.A."/>
            <person name="Van Sluys M.A."/>
            <person name="Kitajima J.P."/>
            <person name="Truffi D."/>
            <person name="do Amaral A.M."/>
            <person name="Harakava R."/>
            <person name="de Oliveira J.C.F."/>
            <person name="Wood D."/>
            <person name="de Oliveira M.C."/>
            <person name="Miyaki C.Y."/>
            <person name="Takita M.A."/>
            <person name="da Silva A.C.R."/>
            <person name="Furlan L.R."/>
            <person name="Carraro D.M."/>
            <person name="Camarotte G."/>
            <person name="Almeida N.F. Jr."/>
            <person name="Carrer H."/>
            <person name="Coutinho L.L."/>
            <person name="El-Dorry H.A."/>
            <person name="Ferro M.I.T."/>
            <person name="Gagliardi P.R."/>
            <person name="Giglioti E."/>
            <person name="Goldman M.H.S."/>
            <person name="Goldman G.H."/>
            <person name="Kimura E.T."/>
            <person name="Ferro E.S."/>
            <person name="Kuramae E.E."/>
            <person name="Lemos E.G.M."/>
            <person name="Lemos M.V.F."/>
            <person name="Mauro S.M.Z."/>
            <person name="Machado M.A."/>
            <person name="Marino C.L."/>
            <person name="Menck C.F."/>
            <person name="Nunes L.R."/>
            <person name="Oliveira R.C."/>
            <person name="Pereira G.G."/>
            <person name="Siqueira W."/>
            <person name="de Souza A.A."/>
            <person name="Tsai S.M."/>
            <person name="Zanca A.S."/>
            <person name="Simpson A.J.G."/>
            <person name="Brumbley S.M."/>
            <person name="Setubal J.C."/>
        </authorList>
    </citation>
    <scope>NUCLEOTIDE SEQUENCE [LARGE SCALE GENOMIC DNA]</scope>
    <source>
        <strain>CTCB07</strain>
    </source>
</reference>
<organism>
    <name type="scientific">Leifsonia xyli subsp. xyli (strain CTCB07)</name>
    <dbReference type="NCBI Taxonomy" id="281090"/>
    <lineage>
        <taxon>Bacteria</taxon>
        <taxon>Bacillati</taxon>
        <taxon>Actinomycetota</taxon>
        <taxon>Actinomycetes</taxon>
        <taxon>Micrococcales</taxon>
        <taxon>Microbacteriaceae</taxon>
        <taxon>Leifsonia</taxon>
    </lineage>
</organism>
<sequence>MSPTSTATSLTDRFSAAKRASIALAIASNAEKDAALRGIAEGVLAAADSILAANAVDLATGRENGLSTGLLDRLTLTPARLQGLADAVLEIVALTDPVGQTVRGSALPNGVKITQIRVPFGVVGAIYEARPNVTIDIAALALKSGNAAVLRGGSAAIATNGVLVGVIQEALAAAGLPADAVQTIDDFGREGANGLMQARGFVDVLIPRGSAGLIQIVVTQSAVPVIETGAGVVHIVLDESAREDWAVDIVRNAKAQRPSACNAVETVLVLRAAAERLLSPVLGALTEAGVTIHADEIALPHSPGAIAVTAEDYATEHMSLDVSVRVVDDLDAAIEHIRTHSTQHTEAIVTNDLANAERFLNEVDSAVVMVNASTRFTDGGEFGFGAEVGISTQKLHARGPMGLPELTSTKWIVRGAGQVRS</sequence>
<dbReference type="EC" id="1.2.1.41" evidence="1"/>
<dbReference type="EMBL" id="AE016822">
    <property type="protein sequence ID" value="AAT88716.1"/>
    <property type="molecule type" value="Genomic_DNA"/>
</dbReference>
<dbReference type="RefSeq" id="WP_011185714.1">
    <property type="nucleotide sequence ID" value="NC_006087.1"/>
</dbReference>
<dbReference type="SMR" id="Q6AFX9"/>
<dbReference type="STRING" id="281090.Lxx08080"/>
<dbReference type="KEGG" id="lxx:Lxx08080"/>
<dbReference type="eggNOG" id="COG0014">
    <property type="taxonomic scope" value="Bacteria"/>
</dbReference>
<dbReference type="HOGENOM" id="CLU_030231_0_0_11"/>
<dbReference type="UniPathway" id="UPA00098">
    <property type="reaction ID" value="UER00360"/>
</dbReference>
<dbReference type="Proteomes" id="UP000001306">
    <property type="component" value="Chromosome"/>
</dbReference>
<dbReference type="GO" id="GO:0005737">
    <property type="term" value="C:cytoplasm"/>
    <property type="evidence" value="ECO:0007669"/>
    <property type="project" value="UniProtKB-SubCell"/>
</dbReference>
<dbReference type="GO" id="GO:0004350">
    <property type="term" value="F:glutamate-5-semialdehyde dehydrogenase activity"/>
    <property type="evidence" value="ECO:0007669"/>
    <property type="project" value="UniProtKB-UniRule"/>
</dbReference>
<dbReference type="GO" id="GO:0050661">
    <property type="term" value="F:NADP binding"/>
    <property type="evidence" value="ECO:0007669"/>
    <property type="project" value="InterPro"/>
</dbReference>
<dbReference type="GO" id="GO:0055129">
    <property type="term" value="P:L-proline biosynthetic process"/>
    <property type="evidence" value="ECO:0007669"/>
    <property type="project" value="UniProtKB-UniRule"/>
</dbReference>
<dbReference type="CDD" id="cd07079">
    <property type="entry name" value="ALDH_F18-19_ProA-GPR"/>
    <property type="match status" value="1"/>
</dbReference>
<dbReference type="FunFam" id="3.40.309.10:FF:000006">
    <property type="entry name" value="Gamma-glutamyl phosphate reductase"/>
    <property type="match status" value="1"/>
</dbReference>
<dbReference type="Gene3D" id="3.40.605.10">
    <property type="entry name" value="Aldehyde Dehydrogenase, Chain A, domain 1"/>
    <property type="match status" value="1"/>
</dbReference>
<dbReference type="Gene3D" id="3.40.309.10">
    <property type="entry name" value="Aldehyde Dehydrogenase, Chain A, domain 2"/>
    <property type="match status" value="1"/>
</dbReference>
<dbReference type="HAMAP" id="MF_00412">
    <property type="entry name" value="ProA"/>
    <property type="match status" value="1"/>
</dbReference>
<dbReference type="InterPro" id="IPR016161">
    <property type="entry name" value="Ald_DH/histidinol_DH"/>
</dbReference>
<dbReference type="InterPro" id="IPR016163">
    <property type="entry name" value="Ald_DH_C"/>
</dbReference>
<dbReference type="InterPro" id="IPR016162">
    <property type="entry name" value="Ald_DH_N"/>
</dbReference>
<dbReference type="InterPro" id="IPR015590">
    <property type="entry name" value="Aldehyde_DH_dom"/>
</dbReference>
<dbReference type="InterPro" id="IPR020593">
    <property type="entry name" value="G-glutamylP_reductase_CS"/>
</dbReference>
<dbReference type="InterPro" id="IPR012134">
    <property type="entry name" value="Glu-5-SA_DH"/>
</dbReference>
<dbReference type="InterPro" id="IPR000965">
    <property type="entry name" value="GPR_dom"/>
</dbReference>
<dbReference type="NCBIfam" id="NF001221">
    <property type="entry name" value="PRK00197.1"/>
    <property type="match status" value="1"/>
</dbReference>
<dbReference type="NCBIfam" id="TIGR00407">
    <property type="entry name" value="proA"/>
    <property type="match status" value="1"/>
</dbReference>
<dbReference type="PANTHER" id="PTHR11063:SF8">
    <property type="entry name" value="DELTA-1-PYRROLINE-5-CARBOXYLATE SYNTHASE"/>
    <property type="match status" value="1"/>
</dbReference>
<dbReference type="PANTHER" id="PTHR11063">
    <property type="entry name" value="GLUTAMATE SEMIALDEHYDE DEHYDROGENASE"/>
    <property type="match status" value="1"/>
</dbReference>
<dbReference type="Pfam" id="PF00171">
    <property type="entry name" value="Aldedh"/>
    <property type="match status" value="1"/>
</dbReference>
<dbReference type="PIRSF" id="PIRSF000151">
    <property type="entry name" value="GPR"/>
    <property type="match status" value="1"/>
</dbReference>
<dbReference type="SUPFAM" id="SSF53720">
    <property type="entry name" value="ALDH-like"/>
    <property type="match status" value="1"/>
</dbReference>
<dbReference type="PROSITE" id="PS01223">
    <property type="entry name" value="PROA"/>
    <property type="match status" value="1"/>
</dbReference>
<keyword id="KW-0028">Amino-acid biosynthesis</keyword>
<keyword id="KW-0963">Cytoplasm</keyword>
<keyword id="KW-0521">NADP</keyword>
<keyword id="KW-0560">Oxidoreductase</keyword>
<keyword id="KW-0641">Proline biosynthesis</keyword>
<keyword id="KW-1185">Reference proteome</keyword>